<dbReference type="EC" id="2.1.2.9" evidence="1"/>
<dbReference type="EMBL" id="CP000916">
    <property type="protein sequence ID" value="ACM22318.1"/>
    <property type="molecule type" value="Genomic_DNA"/>
</dbReference>
<dbReference type="RefSeq" id="WP_012645028.1">
    <property type="nucleotide sequence ID" value="NC_011978.1"/>
</dbReference>
<dbReference type="SMR" id="B9KBC2"/>
<dbReference type="STRING" id="309803.CTN_0142"/>
<dbReference type="KEGG" id="tna:CTN_0142"/>
<dbReference type="eggNOG" id="COG0223">
    <property type="taxonomic scope" value="Bacteria"/>
</dbReference>
<dbReference type="HOGENOM" id="CLU_033347_1_1_0"/>
<dbReference type="Proteomes" id="UP000000445">
    <property type="component" value="Chromosome"/>
</dbReference>
<dbReference type="GO" id="GO:0005829">
    <property type="term" value="C:cytosol"/>
    <property type="evidence" value="ECO:0007669"/>
    <property type="project" value="TreeGrafter"/>
</dbReference>
<dbReference type="GO" id="GO:0004479">
    <property type="term" value="F:methionyl-tRNA formyltransferase activity"/>
    <property type="evidence" value="ECO:0007669"/>
    <property type="project" value="UniProtKB-UniRule"/>
</dbReference>
<dbReference type="CDD" id="cd08646">
    <property type="entry name" value="FMT_core_Met-tRNA-FMT_N"/>
    <property type="match status" value="1"/>
</dbReference>
<dbReference type="CDD" id="cd08704">
    <property type="entry name" value="Met_tRNA_FMT_C"/>
    <property type="match status" value="1"/>
</dbReference>
<dbReference type="FunFam" id="3.40.50.12230:FF:000001">
    <property type="entry name" value="Methionyl-tRNA formyltransferase"/>
    <property type="match status" value="1"/>
</dbReference>
<dbReference type="Gene3D" id="3.40.50.12230">
    <property type="match status" value="1"/>
</dbReference>
<dbReference type="HAMAP" id="MF_00182">
    <property type="entry name" value="Formyl_trans"/>
    <property type="match status" value="1"/>
</dbReference>
<dbReference type="InterPro" id="IPR005794">
    <property type="entry name" value="Fmt"/>
</dbReference>
<dbReference type="InterPro" id="IPR005793">
    <property type="entry name" value="Formyl_trans_C"/>
</dbReference>
<dbReference type="InterPro" id="IPR002376">
    <property type="entry name" value="Formyl_transf_N"/>
</dbReference>
<dbReference type="InterPro" id="IPR036477">
    <property type="entry name" value="Formyl_transf_N_sf"/>
</dbReference>
<dbReference type="InterPro" id="IPR011034">
    <property type="entry name" value="Formyl_transferase-like_C_sf"/>
</dbReference>
<dbReference type="InterPro" id="IPR001555">
    <property type="entry name" value="GART_AS"/>
</dbReference>
<dbReference type="InterPro" id="IPR044135">
    <property type="entry name" value="Met-tRNA-FMT_C"/>
</dbReference>
<dbReference type="InterPro" id="IPR041711">
    <property type="entry name" value="Met-tRNA-FMT_N"/>
</dbReference>
<dbReference type="NCBIfam" id="TIGR00460">
    <property type="entry name" value="fmt"/>
    <property type="match status" value="1"/>
</dbReference>
<dbReference type="PANTHER" id="PTHR11138">
    <property type="entry name" value="METHIONYL-TRNA FORMYLTRANSFERASE"/>
    <property type="match status" value="1"/>
</dbReference>
<dbReference type="PANTHER" id="PTHR11138:SF5">
    <property type="entry name" value="METHIONYL-TRNA FORMYLTRANSFERASE, MITOCHONDRIAL"/>
    <property type="match status" value="1"/>
</dbReference>
<dbReference type="Pfam" id="PF02911">
    <property type="entry name" value="Formyl_trans_C"/>
    <property type="match status" value="1"/>
</dbReference>
<dbReference type="Pfam" id="PF00551">
    <property type="entry name" value="Formyl_trans_N"/>
    <property type="match status" value="1"/>
</dbReference>
<dbReference type="SUPFAM" id="SSF50486">
    <property type="entry name" value="FMT C-terminal domain-like"/>
    <property type="match status" value="1"/>
</dbReference>
<dbReference type="SUPFAM" id="SSF53328">
    <property type="entry name" value="Formyltransferase"/>
    <property type="match status" value="1"/>
</dbReference>
<dbReference type="PROSITE" id="PS00373">
    <property type="entry name" value="GART"/>
    <property type="match status" value="1"/>
</dbReference>
<feature type="chain" id="PRO_1000190049" description="Methionyl-tRNA formyltransferase">
    <location>
        <begin position="1"/>
        <end position="313"/>
    </location>
</feature>
<feature type="binding site" evidence="1">
    <location>
        <begin position="109"/>
        <end position="112"/>
    </location>
    <ligand>
        <name>(6S)-5,6,7,8-tetrahydrofolate</name>
        <dbReference type="ChEBI" id="CHEBI:57453"/>
    </ligand>
</feature>
<keyword id="KW-0648">Protein biosynthesis</keyword>
<keyword id="KW-0808">Transferase</keyword>
<evidence type="ECO:0000255" key="1">
    <source>
        <dbReference type="HAMAP-Rule" id="MF_00182"/>
    </source>
</evidence>
<name>FMT_THENN</name>
<gene>
    <name evidence="1" type="primary">fmt</name>
    <name type="ordered locus">CTN_0142</name>
</gene>
<reference key="1">
    <citation type="submission" date="2007-11" db="EMBL/GenBank/DDBJ databases">
        <title>The genome sequence of the hyperthermophilic bacterium Thermotoga neapolitana.</title>
        <authorList>
            <person name="Lim S.K."/>
            <person name="Kim J.S."/>
            <person name="Cha S.H."/>
            <person name="Park B.C."/>
            <person name="Lee D.S."/>
            <person name="Tae H.S."/>
            <person name="Kim S.-J."/>
            <person name="Kim J.J."/>
            <person name="Park K.J."/>
            <person name="Lee S.Y."/>
        </authorList>
    </citation>
    <scope>NUCLEOTIDE SEQUENCE [LARGE SCALE GENOMIC DNA]</scope>
    <source>
        <strain>ATCC 49049 / DSM 4359 / NBRC 107923 / NS-E</strain>
    </source>
</reference>
<comment type="function">
    <text evidence="1">Attaches a formyl group to the free amino group of methionyl-tRNA(fMet). The formyl group appears to play a dual role in the initiator identity of N-formylmethionyl-tRNA by promoting its recognition by IF2 and preventing the misappropriation of this tRNA by the elongation apparatus.</text>
</comment>
<comment type="catalytic activity">
    <reaction evidence="1">
        <text>L-methionyl-tRNA(fMet) + (6R)-10-formyltetrahydrofolate = N-formyl-L-methionyl-tRNA(fMet) + (6S)-5,6,7,8-tetrahydrofolate + H(+)</text>
        <dbReference type="Rhea" id="RHEA:24380"/>
        <dbReference type="Rhea" id="RHEA-COMP:9952"/>
        <dbReference type="Rhea" id="RHEA-COMP:9953"/>
        <dbReference type="ChEBI" id="CHEBI:15378"/>
        <dbReference type="ChEBI" id="CHEBI:57453"/>
        <dbReference type="ChEBI" id="CHEBI:78530"/>
        <dbReference type="ChEBI" id="CHEBI:78844"/>
        <dbReference type="ChEBI" id="CHEBI:195366"/>
        <dbReference type="EC" id="2.1.2.9"/>
    </reaction>
</comment>
<comment type="similarity">
    <text evidence="1">Belongs to the Fmt family.</text>
</comment>
<accession>B9KBC2</accession>
<protein>
    <recommendedName>
        <fullName evidence="1">Methionyl-tRNA formyltransferase</fullName>
        <ecNumber evidence="1">2.1.2.9</ecNumber>
    </recommendedName>
</protein>
<sequence>MRVVFVGTPEFAAEILRYMVKKGINIVGVVTQPDKPKGRGRKTLPTPVKVVAEEKGLPCIQPESINRKEALEFLHSVNPDVLIVASYGKILGEKVLSLPKHGCYNIHPSLLPKYRGASPIQRALENGEKKTGVTIYRMVKELDAGPIALQREVNIDPFETFDQLEKRLIELSKEMVIEFLEKLENGEIHLREQDHTRATYAPLIKKEDLFVDFSKGAETVKNKIRAYDSRPGARAFLNGKEVKLFGAMAVDSSNDEPGLIHYIDREGAWIGTGKGMVKVKYLQLPGKKKLTFWELRNGRLIEEGMKLEGRYES</sequence>
<organism>
    <name type="scientific">Thermotoga neapolitana (strain ATCC 49049 / DSM 4359 / NBRC 107923 / NS-E)</name>
    <dbReference type="NCBI Taxonomy" id="309803"/>
    <lineage>
        <taxon>Bacteria</taxon>
        <taxon>Thermotogati</taxon>
        <taxon>Thermotogota</taxon>
        <taxon>Thermotogae</taxon>
        <taxon>Thermotogales</taxon>
        <taxon>Thermotogaceae</taxon>
        <taxon>Thermotoga</taxon>
    </lineage>
</organism>
<proteinExistence type="inferred from homology"/>